<gene>
    <name type="primary">PLA1A</name>
</gene>
<accession>Q5RBQ5</accession>
<accession>Q5REF0</accession>
<organism>
    <name type="scientific">Pongo abelii</name>
    <name type="common">Sumatran orangutan</name>
    <name type="synonym">Pongo pygmaeus abelii</name>
    <dbReference type="NCBI Taxonomy" id="9601"/>
    <lineage>
        <taxon>Eukaryota</taxon>
        <taxon>Metazoa</taxon>
        <taxon>Chordata</taxon>
        <taxon>Craniata</taxon>
        <taxon>Vertebrata</taxon>
        <taxon>Euteleostomi</taxon>
        <taxon>Mammalia</taxon>
        <taxon>Eutheria</taxon>
        <taxon>Euarchontoglires</taxon>
        <taxon>Primates</taxon>
        <taxon>Haplorrhini</taxon>
        <taxon>Catarrhini</taxon>
        <taxon>Hominidae</taxon>
        <taxon>Pongo</taxon>
    </lineage>
</organism>
<feature type="signal peptide" evidence="4">
    <location>
        <begin position="1"/>
        <end position="25"/>
    </location>
</feature>
<feature type="chain" id="PRO_0000273332" description="Phospholipase A1 member A">
    <location>
        <begin position="26"/>
        <end position="456"/>
    </location>
</feature>
<feature type="active site" description="Nucleophile" evidence="1">
    <location>
        <position position="166"/>
    </location>
</feature>
<feature type="active site" description="Charge relay system" evidence="5">
    <location>
        <position position="190"/>
    </location>
</feature>
<feature type="active site" description="Charge relay system" evidence="5">
    <location>
        <position position="260"/>
    </location>
</feature>
<feature type="glycosylation site" description="N-linked (GlcNAc...) asparagine" evidence="4">
    <location>
        <position position="365"/>
    </location>
</feature>
<feature type="disulfide bond" evidence="1">
    <location>
        <begin position="245"/>
        <end position="258"/>
    </location>
</feature>
<feature type="disulfide bond" evidence="1">
    <location>
        <begin position="282"/>
        <end position="293"/>
    </location>
</feature>
<feature type="disulfide bond" evidence="1">
    <location>
        <begin position="296"/>
        <end position="304"/>
    </location>
</feature>
<feature type="splice variant" id="VSP_022510" description="In isoform 2." evidence="6">
    <location>
        <begin position="1"/>
        <end position="173"/>
    </location>
</feature>
<dbReference type="EC" id="3.1.1.111" evidence="2"/>
<dbReference type="EMBL" id="CR857579">
    <property type="protein sequence ID" value="CAH89857.1"/>
    <property type="molecule type" value="mRNA"/>
</dbReference>
<dbReference type="EMBL" id="CR858583">
    <property type="protein sequence ID" value="CAH90805.1"/>
    <property type="molecule type" value="mRNA"/>
</dbReference>
<dbReference type="RefSeq" id="NP_001124864.1">
    <property type="nucleotide sequence ID" value="NM_001131392.1"/>
</dbReference>
<dbReference type="RefSeq" id="NP_001128786.1">
    <property type="nucleotide sequence ID" value="NM_001135314.1"/>
</dbReference>
<dbReference type="SMR" id="Q5RBQ5"/>
<dbReference type="FunCoup" id="Q5RBQ5">
    <property type="interactions" value="530"/>
</dbReference>
<dbReference type="STRING" id="9601.ENSPPYP00000015111"/>
<dbReference type="ESTHER" id="ponpy-q5ref0">
    <property type="family name" value="Phospholipase"/>
</dbReference>
<dbReference type="GlyCosmos" id="Q5RBQ5">
    <property type="glycosylation" value="1 site, No reported glycans"/>
</dbReference>
<dbReference type="Ensembl" id="ENSPPYT00000015714.3">
    <molecule id="Q5RBQ5-1"/>
    <property type="protein sequence ID" value="ENSPPYP00000015111.3"/>
    <property type="gene ID" value="ENSPPYG00000013512.3"/>
</dbReference>
<dbReference type="GeneID" id="100171726"/>
<dbReference type="KEGG" id="pon:100171726"/>
<dbReference type="CTD" id="51365"/>
<dbReference type="eggNOG" id="ENOG502QQQP">
    <property type="taxonomic scope" value="Eukaryota"/>
</dbReference>
<dbReference type="GeneTree" id="ENSGT00940000159279"/>
<dbReference type="InParanoid" id="Q5RBQ5"/>
<dbReference type="OMA" id="AHANPQC"/>
<dbReference type="OrthoDB" id="199913at2759"/>
<dbReference type="Proteomes" id="UP000001595">
    <property type="component" value="Chromosome 3"/>
</dbReference>
<dbReference type="GO" id="GO:0002080">
    <property type="term" value="C:acrosomal membrane"/>
    <property type="evidence" value="ECO:0007669"/>
    <property type="project" value="Ensembl"/>
</dbReference>
<dbReference type="GO" id="GO:0005615">
    <property type="term" value="C:extracellular space"/>
    <property type="evidence" value="ECO:0007669"/>
    <property type="project" value="TreeGrafter"/>
</dbReference>
<dbReference type="GO" id="GO:0008970">
    <property type="term" value="F:phospholipase A1 activity"/>
    <property type="evidence" value="ECO:0007669"/>
    <property type="project" value="Ensembl"/>
</dbReference>
<dbReference type="GO" id="GO:0016042">
    <property type="term" value="P:lipid catabolic process"/>
    <property type="evidence" value="ECO:0007669"/>
    <property type="project" value="UniProtKB-KW"/>
</dbReference>
<dbReference type="CDD" id="cd00707">
    <property type="entry name" value="Pancreat_lipase_like"/>
    <property type="match status" value="1"/>
</dbReference>
<dbReference type="FunFam" id="3.40.50.1820:FF:000081">
    <property type="entry name" value="phospholipase A1 member A isoform X1"/>
    <property type="match status" value="1"/>
</dbReference>
<dbReference type="Gene3D" id="3.40.50.1820">
    <property type="entry name" value="alpha/beta hydrolase"/>
    <property type="match status" value="1"/>
</dbReference>
<dbReference type="InterPro" id="IPR029058">
    <property type="entry name" value="AB_hydrolase_fold"/>
</dbReference>
<dbReference type="InterPro" id="IPR013818">
    <property type="entry name" value="Lipase"/>
</dbReference>
<dbReference type="InterPro" id="IPR016272">
    <property type="entry name" value="Lipase_LIPH"/>
</dbReference>
<dbReference type="InterPro" id="IPR033906">
    <property type="entry name" value="Lipase_N"/>
</dbReference>
<dbReference type="InterPro" id="IPR000734">
    <property type="entry name" value="TAG_lipase"/>
</dbReference>
<dbReference type="PANTHER" id="PTHR11610">
    <property type="entry name" value="LIPASE"/>
    <property type="match status" value="1"/>
</dbReference>
<dbReference type="PANTHER" id="PTHR11610:SF111">
    <property type="entry name" value="PHOSPHOLIPASE A1 MEMBER A"/>
    <property type="match status" value="1"/>
</dbReference>
<dbReference type="Pfam" id="PF00151">
    <property type="entry name" value="Lipase"/>
    <property type="match status" value="1"/>
</dbReference>
<dbReference type="PIRSF" id="PIRSF000865">
    <property type="entry name" value="Lipoprotein_lipase_LIPH"/>
    <property type="match status" value="1"/>
</dbReference>
<dbReference type="PRINTS" id="PR00821">
    <property type="entry name" value="TAGLIPASE"/>
</dbReference>
<dbReference type="SUPFAM" id="SSF53474">
    <property type="entry name" value="alpha/beta-Hydrolases"/>
    <property type="match status" value="1"/>
</dbReference>
<dbReference type="PROSITE" id="PS00120">
    <property type="entry name" value="LIPASE_SER"/>
    <property type="match status" value="1"/>
</dbReference>
<keyword id="KW-0025">Alternative splicing</keyword>
<keyword id="KW-1015">Disulfide bond</keyword>
<keyword id="KW-0325">Glycoprotein</keyword>
<keyword id="KW-0378">Hydrolase</keyword>
<keyword id="KW-0442">Lipid degradation</keyword>
<keyword id="KW-0443">Lipid metabolism</keyword>
<keyword id="KW-1185">Reference proteome</keyword>
<keyword id="KW-0964">Secreted</keyword>
<keyword id="KW-0732">Signal</keyword>
<evidence type="ECO:0000250" key="1"/>
<evidence type="ECO:0000250" key="2">
    <source>
        <dbReference type="UniProtKB" id="P97535"/>
    </source>
</evidence>
<evidence type="ECO:0000250" key="3">
    <source>
        <dbReference type="UniProtKB" id="Q53H76"/>
    </source>
</evidence>
<evidence type="ECO:0000255" key="4"/>
<evidence type="ECO:0000255" key="5">
    <source>
        <dbReference type="PROSITE-ProRule" id="PRU10037"/>
    </source>
</evidence>
<evidence type="ECO:0000303" key="6">
    <source ref="1"/>
</evidence>
<evidence type="ECO:0000305" key="7"/>
<protein>
    <recommendedName>
        <fullName>Phospholipase A1 member A</fullName>
        <ecNumber evidence="2">3.1.1.111</ecNumber>
    </recommendedName>
</protein>
<name>PLA1A_PONAB</name>
<sequence length="456" mass="49710">MPPGPWESCFWVGGLLLWLSVGSSGDAPPTPQPNCADFQSANLFEGTDLKVQFLLFVPSNPSCGQLVEGSSDLQNSGFNATLGTKLIIHGFRVLGTKPSWIDKFIRTLLLATNANVIAVDWIYGSTGVYFSAVKNVIKLSLEISLFLNKLLVLGVSESSIHIIGVSLGAHVGGMVGQLFGGQLGQITGLDPAGPEYTRASVEERLDAGDALFVEAIHTDTDNLGIRIPVGHVDYFVNGGQDQPGCPTFFYAGYSYLICDHMRAVHLYISALENSCPLMAFPCASYKAFLAGRCLDCFNPFLLSCPRIGLVEQGGVKIEPLPKEVKVYLLTTSSAPYCMHHSLVEFHLKELRNKDTNIEVTFLSSNVTSSSKITIPKQQRYGKGIIAHATPQCQINQVKFKFQSSNRVWKKDRTTIIGKFCTALLPVNDREKMVCLPEPVNLQASVTVSRDLNLACV</sequence>
<comment type="function">
    <text evidence="2 3">Hydrolyzes the ester bond of the acyl group attached at the sn-1 position of phosphatidylserines (phospholipase A1 activity) and 1-acyl-2-lysophosphatidylserines (lysophospholipase activity) in the pathway of phosphatidylserines acyl chain remodeling (By similarity). Cleaves phosphatidylserines exposed on the outer leaflet of the plasma membrane of apoptotic cells producing 2-acyl-1-lysophosphatidylserines, which in turn enhance mast cell activation and histamine production. Has no activity toward other glycerophospholipids including phosphatidylcholines, phosphatidylethanolamines, phosphatidic acids or phosphatidylinositols, or glycerolipids such as triolein (By similarity).</text>
</comment>
<comment type="catalytic activity">
    <reaction evidence="2">
        <text>a 1,2-diacyl-sn-glycero-3-phospho-L-serine + H2O = a 2-acyl-sn-glycero-3-phospho-L-serine + a fatty acid + H(+)</text>
        <dbReference type="Rhea" id="RHEA:42212"/>
        <dbReference type="ChEBI" id="CHEBI:15377"/>
        <dbReference type="ChEBI" id="CHEBI:15378"/>
        <dbReference type="ChEBI" id="CHEBI:28868"/>
        <dbReference type="ChEBI" id="CHEBI:57262"/>
        <dbReference type="ChEBI" id="CHEBI:65214"/>
        <dbReference type="EC" id="3.1.1.111"/>
    </reaction>
    <physiologicalReaction direction="left-to-right" evidence="2">
        <dbReference type="Rhea" id="RHEA:42213"/>
    </physiologicalReaction>
</comment>
<comment type="catalytic activity">
    <reaction evidence="2">
        <text>1,2-di-(9Z)-octadecenoyl-sn-glycero-3-phospho-L-serine + H2O = 2-(9Z-octadecenoyl)-sn-glycero-3-phospho-L-serine + (9Z)-octadecenoate + H(+)</text>
        <dbReference type="Rhea" id="RHEA:40491"/>
        <dbReference type="ChEBI" id="CHEBI:15377"/>
        <dbReference type="ChEBI" id="CHEBI:15378"/>
        <dbReference type="ChEBI" id="CHEBI:30823"/>
        <dbReference type="ChEBI" id="CHEBI:74905"/>
        <dbReference type="ChEBI" id="CHEBI:77342"/>
    </reaction>
    <physiologicalReaction direction="left-to-right" evidence="2">
        <dbReference type="Rhea" id="RHEA:40492"/>
    </physiologicalReaction>
</comment>
<comment type="catalytic activity">
    <reaction evidence="2">
        <text>1-hexadecanoyl-2-(5Z,8Z,11Z,14Z-eicosatetraenoyl)-sn-glycero-3-phospho-L-serine + H2O = 2-(5Z,8Z,11Z,14Z)-eicosatetraenoyl-sn-glycero-3-phospho-L-serine + hexadecanoate + H(+)</text>
        <dbReference type="Rhea" id="RHEA:41187"/>
        <dbReference type="ChEBI" id="CHEBI:7896"/>
        <dbReference type="ChEBI" id="CHEBI:15377"/>
        <dbReference type="ChEBI" id="CHEBI:15378"/>
        <dbReference type="ChEBI" id="CHEBI:75032"/>
        <dbReference type="ChEBI" id="CHEBI:77830"/>
    </reaction>
    <physiologicalReaction direction="left-to-right" evidence="2">
        <dbReference type="Rhea" id="RHEA:41188"/>
    </physiologicalReaction>
</comment>
<comment type="catalytic activity">
    <reaction evidence="2">
        <text>a 1-acyl-sn-glycero-3-phospho-L-serine + H2O = sn-glycero-3-phospho-L-serine + a fatty acid + H(+)</text>
        <dbReference type="Rhea" id="RHEA:32979"/>
        <dbReference type="ChEBI" id="CHEBI:15377"/>
        <dbReference type="ChEBI" id="CHEBI:15378"/>
        <dbReference type="ChEBI" id="CHEBI:28868"/>
        <dbReference type="ChEBI" id="CHEBI:64379"/>
        <dbReference type="ChEBI" id="CHEBI:64765"/>
        <dbReference type="EC" id="3.1.1.111"/>
    </reaction>
    <physiologicalReaction direction="left-to-right" evidence="2">
        <dbReference type="Rhea" id="RHEA:32980"/>
    </physiologicalReaction>
</comment>
<comment type="catalytic activity">
    <reaction evidence="2">
        <text>1-(9Z-octadecenoyl)-sn-glycero-3-phospho-L-serine + H2O = sn-glycero-3-phospho-L-serine + (9Z)-octadecenoate + H(+)</text>
        <dbReference type="Rhea" id="RHEA:40499"/>
        <dbReference type="ChEBI" id="CHEBI:15377"/>
        <dbReference type="ChEBI" id="CHEBI:15378"/>
        <dbReference type="ChEBI" id="CHEBI:30823"/>
        <dbReference type="ChEBI" id="CHEBI:64765"/>
        <dbReference type="ChEBI" id="CHEBI:74617"/>
    </reaction>
    <physiologicalReaction direction="left-to-right" evidence="2">
        <dbReference type="Rhea" id="RHEA:40500"/>
    </physiologicalReaction>
</comment>
<comment type="subcellular location">
    <subcellularLocation>
        <location evidence="2">Secreted</location>
    </subcellularLocation>
</comment>
<comment type="alternative products">
    <event type="alternative splicing"/>
    <isoform>
        <id>Q5RBQ5-1</id>
        <name>1</name>
        <sequence type="displayed"/>
    </isoform>
    <isoform>
        <id>Q5RBQ5-2</id>
        <name>2</name>
        <sequence type="described" ref="VSP_022510"/>
    </isoform>
</comment>
<comment type="similarity">
    <text evidence="7">Belongs to the AB hydrolase superfamily. Lipase family.</text>
</comment>
<reference key="1">
    <citation type="submission" date="2004-11" db="EMBL/GenBank/DDBJ databases">
        <authorList>
            <consortium name="The German cDNA consortium"/>
        </authorList>
    </citation>
    <scope>NUCLEOTIDE SEQUENCE [LARGE SCALE MRNA] (ISOFORMS 1 AND 2)</scope>
    <source>
        <tissue>Kidney</tissue>
    </source>
</reference>
<proteinExistence type="evidence at transcript level"/>